<sequence>MKPTTLLLIFTFFAMPGIVYAESPFSSLQSAKEKTTVLQDLRKICTPQASLSDEAWEKLMLSDENNKQHIREAIVAMERNNQSNYWEALGKVECPDM</sequence>
<name>YICS_SHISS</name>
<accession>Q3YWE7</accession>
<protein>
    <recommendedName>
        <fullName>Uncharacterized protein YicS</fullName>
    </recommendedName>
</protein>
<keyword id="KW-1185">Reference proteome</keyword>
<reference key="1">
    <citation type="journal article" date="2005" name="Nucleic Acids Res.">
        <title>Genome dynamics and diversity of Shigella species, the etiologic agents of bacillary dysentery.</title>
        <authorList>
            <person name="Yang F."/>
            <person name="Yang J."/>
            <person name="Zhang X."/>
            <person name="Chen L."/>
            <person name="Jiang Y."/>
            <person name="Yan Y."/>
            <person name="Tang X."/>
            <person name="Wang J."/>
            <person name="Xiong Z."/>
            <person name="Dong J."/>
            <person name="Xue Y."/>
            <person name="Zhu Y."/>
            <person name="Xu X."/>
            <person name="Sun L."/>
            <person name="Chen S."/>
            <person name="Nie H."/>
            <person name="Peng J."/>
            <person name="Xu J."/>
            <person name="Wang Y."/>
            <person name="Yuan Z."/>
            <person name="Wen Y."/>
            <person name="Yao Z."/>
            <person name="Shen Y."/>
            <person name="Qiang B."/>
            <person name="Hou Y."/>
            <person name="Yu J."/>
            <person name="Jin Q."/>
        </authorList>
    </citation>
    <scope>NUCLEOTIDE SEQUENCE [LARGE SCALE GENOMIC DNA]</scope>
    <source>
        <strain>Ss046</strain>
    </source>
</reference>
<organism>
    <name type="scientific">Shigella sonnei (strain Ss046)</name>
    <dbReference type="NCBI Taxonomy" id="300269"/>
    <lineage>
        <taxon>Bacteria</taxon>
        <taxon>Pseudomonadati</taxon>
        <taxon>Pseudomonadota</taxon>
        <taxon>Gammaproteobacteria</taxon>
        <taxon>Enterobacterales</taxon>
        <taxon>Enterobacteriaceae</taxon>
        <taxon>Shigella</taxon>
    </lineage>
</organism>
<feature type="chain" id="PRO_0000262304" description="Uncharacterized protein YicS">
    <location>
        <begin position="1"/>
        <end position="97"/>
    </location>
</feature>
<proteinExistence type="predicted"/>
<dbReference type="EMBL" id="CP000038">
    <property type="protein sequence ID" value="AAZ90165.1"/>
    <property type="molecule type" value="Genomic_DNA"/>
</dbReference>
<dbReference type="RefSeq" id="WP_000805509.1">
    <property type="nucleotide sequence ID" value="NC_007384.1"/>
</dbReference>
<dbReference type="SMR" id="Q3YWE7"/>
<dbReference type="GeneID" id="93778401"/>
<dbReference type="KEGG" id="ssn:SSON_3614"/>
<dbReference type="HOGENOM" id="CLU_159877_2_0_6"/>
<dbReference type="Proteomes" id="UP000002529">
    <property type="component" value="Chromosome"/>
</dbReference>
<dbReference type="InterPro" id="IPR048144">
    <property type="entry name" value="YicS_fam"/>
</dbReference>
<dbReference type="NCBIfam" id="NF041639">
    <property type="entry name" value="YicS_fam"/>
    <property type="match status" value="1"/>
</dbReference>
<gene>
    <name type="primary">yicS</name>
    <name type="ordered locus">SSON_3614</name>
</gene>